<dbReference type="EMBL" id="AY653733">
    <property type="protein sequence ID" value="AAV50825.1"/>
    <property type="molecule type" value="Genomic_DNA"/>
</dbReference>
<dbReference type="KEGG" id="vg:9925197"/>
<dbReference type="Proteomes" id="UP000001134">
    <property type="component" value="Genome"/>
</dbReference>
<evidence type="ECO:0000255" key="1"/>
<evidence type="ECO:0000256" key="2">
    <source>
        <dbReference type="SAM" id="MobiDB-lite"/>
    </source>
</evidence>
<accession>Q5UR41</accession>
<name>YR561_MIMIV</name>
<gene>
    <name type="ordered locus">MIMI_R561</name>
</gene>
<organismHost>
    <name type="scientific">Acanthamoeba polyphaga</name>
    <name type="common">Amoeba</name>
    <dbReference type="NCBI Taxonomy" id="5757"/>
</organismHost>
<organism>
    <name type="scientific">Acanthamoeba polyphaga mimivirus</name>
    <name type="common">APMV</name>
    <dbReference type="NCBI Taxonomy" id="212035"/>
    <lineage>
        <taxon>Viruses</taxon>
        <taxon>Varidnaviria</taxon>
        <taxon>Bamfordvirae</taxon>
        <taxon>Nucleocytoviricota</taxon>
        <taxon>Megaviricetes</taxon>
        <taxon>Imitervirales</taxon>
        <taxon>Mimiviridae</taxon>
        <taxon>Megamimivirinae</taxon>
        <taxon>Mimivirus</taxon>
        <taxon>Mimivirus bradfordmassiliense</taxon>
    </lineage>
</organism>
<keyword id="KW-0175">Coiled coil</keyword>
<keyword id="KW-1185">Reference proteome</keyword>
<proteinExistence type="predicted"/>
<feature type="chain" id="PRO_0000244020" description="Uncharacterized protein R561">
    <location>
        <begin position="1"/>
        <end position="256"/>
    </location>
</feature>
<feature type="region of interest" description="Disordered" evidence="2">
    <location>
        <begin position="1"/>
        <end position="171"/>
    </location>
</feature>
<feature type="region of interest" description="Disordered" evidence="2">
    <location>
        <begin position="185"/>
        <end position="256"/>
    </location>
</feature>
<feature type="coiled-coil region" evidence="1">
    <location>
        <begin position="14"/>
        <end position="39"/>
    </location>
</feature>
<feature type="compositionally biased region" description="Acidic residues" evidence="2">
    <location>
        <begin position="21"/>
        <end position="35"/>
    </location>
</feature>
<feature type="compositionally biased region" description="Acidic residues" evidence="2">
    <location>
        <begin position="64"/>
        <end position="92"/>
    </location>
</feature>
<feature type="compositionally biased region" description="Basic and acidic residues" evidence="2">
    <location>
        <begin position="108"/>
        <end position="129"/>
    </location>
</feature>
<feature type="compositionally biased region" description="Gly residues" evidence="2">
    <location>
        <begin position="192"/>
        <end position="205"/>
    </location>
</feature>
<feature type="compositionally biased region" description="Basic and acidic residues" evidence="2">
    <location>
        <begin position="219"/>
        <end position="234"/>
    </location>
</feature>
<sequence>MARGKKTQETGSSKRRSKVQEEEEHVEGSEEEVEEPEQKSSKRGSRKTTNSTSNKKKSVKKVESDDDDEDDLSELDVVVEDDNPVETSDNDEVATTPQQEKSSRSRKNRGDHESHDDNSDNEEQGDRGNRREHKPRPKVDPNTPIGKLATDQILQFLQERGEESFNPQLKHGARQLLNQLLGKYNGQRYGSKRGGPPRGSFGQRGGFNSRGRGMPPRMRQGDTRDTRDTRDTRLRFNTTQSNRRELNDQSDDLYND</sequence>
<protein>
    <recommendedName>
        <fullName>Uncharacterized protein R561</fullName>
    </recommendedName>
</protein>
<reference key="1">
    <citation type="journal article" date="2004" name="Science">
        <title>The 1.2-megabase genome sequence of Mimivirus.</title>
        <authorList>
            <person name="Raoult D."/>
            <person name="Audic S."/>
            <person name="Robert C."/>
            <person name="Abergel C."/>
            <person name="Renesto P."/>
            <person name="Ogata H."/>
            <person name="La Scola B."/>
            <person name="Susan M."/>
            <person name="Claverie J.-M."/>
        </authorList>
    </citation>
    <scope>NUCLEOTIDE SEQUENCE [LARGE SCALE GENOMIC DNA]</scope>
    <source>
        <strain>Rowbotham-Bradford</strain>
    </source>
</reference>